<gene>
    <name evidence="1" type="primary">ilvD</name>
    <name type="ordered locus">TT_C0871</name>
</gene>
<feature type="chain" id="PRO_0000225433" description="Dihydroxy-acid dehydratase">
    <location>
        <begin position="1"/>
        <end position="555"/>
    </location>
</feature>
<feature type="active site" description="Proton acceptor" evidence="1">
    <location>
        <position position="468"/>
    </location>
</feature>
<feature type="binding site" evidence="1">
    <location>
        <position position="46"/>
    </location>
    <ligand>
        <name>[2Fe-2S] cluster</name>
        <dbReference type="ChEBI" id="CHEBI:190135"/>
    </ligand>
</feature>
<feature type="binding site" evidence="1">
    <location>
        <position position="78"/>
    </location>
    <ligand>
        <name>Mg(2+)</name>
        <dbReference type="ChEBI" id="CHEBI:18420"/>
    </ligand>
</feature>
<feature type="binding site" evidence="1">
    <location>
        <position position="119"/>
    </location>
    <ligand>
        <name>[2Fe-2S] cluster</name>
        <dbReference type="ChEBI" id="CHEBI:190135"/>
    </ligand>
</feature>
<feature type="binding site" evidence="1">
    <location>
        <position position="120"/>
    </location>
    <ligand>
        <name>Mg(2+)</name>
        <dbReference type="ChEBI" id="CHEBI:18420"/>
    </ligand>
</feature>
<feature type="binding site" description="via carbamate group" evidence="1">
    <location>
        <position position="121"/>
    </location>
    <ligand>
        <name>Mg(2+)</name>
        <dbReference type="ChEBI" id="CHEBI:18420"/>
    </ligand>
</feature>
<feature type="binding site" evidence="1">
    <location>
        <position position="191"/>
    </location>
    <ligand>
        <name>[2Fe-2S] cluster</name>
        <dbReference type="ChEBI" id="CHEBI:190135"/>
    </ligand>
</feature>
<feature type="binding site" evidence="1">
    <location>
        <position position="442"/>
    </location>
    <ligand>
        <name>Mg(2+)</name>
        <dbReference type="ChEBI" id="CHEBI:18420"/>
    </ligand>
</feature>
<feature type="modified residue" description="N6-carboxylysine" evidence="1">
    <location>
        <position position="121"/>
    </location>
</feature>
<name>ILVD_THET2</name>
<proteinExistence type="inferred from homology"/>
<keyword id="KW-0001">2Fe-2S</keyword>
<keyword id="KW-0028">Amino-acid biosynthesis</keyword>
<keyword id="KW-0100">Branched-chain amino acid biosynthesis</keyword>
<keyword id="KW-0408">Iron</keyword>
<keyword id="KW-0411">Iron-sulfur</keyword>
<keyword id="KW-0456">Lyase</keyword>
<keyword id="KW-0460">Magnesium</keyword>
<keyword id="KW-0479">Metal-binding</keyword>
<dbReference type="EC" id="4.2.1.9" evidence="1"/>
<dbReference type="EMBL" id="AE017221">
    <property type="protein sequence ID" value="AAS81215.1"/>
    <property type="molecule type" value="Genomic_DNA"/>
</dbReference>
<dbReference type="RefSeq" id="WP_011173300.1">
    <property type="nucleotide sequence ID" value="NC_005835.1"/>
</dbReference>
<dbReference type="SMR" id="Q72JA8"/>
<dbReference type="KEGG" id="tth:TT_C0871"/>
<dbReference type="eggNOG" id="COG0129">
    <property type="taxonomic scope" value="Bacteria"/>
</dbReference>
<dbReference type="HOGENOM" id="CLU_014271_4_2_0"/>
<dbReference type="OrthoDB" id="9807077at2"/>
<dbReference type="UniPathway" id="UPA00047">
    <property type="reaction ID" value="UER00057"/>
</dbReference>
<dbReference type="UniPathway" id="UPA00049">
    <property type="reaction ID" value="UER00061"/>
</dbReference>
<dbReference type="Proteomes" id="UP000000592">
    <property type="component" value="Chromosome"/>
</dbReference>
<dbReference type="GO" id="GO:0051537">
    <property type="term" value="F:2 iron, 2 sulfur cluster binding"/>
    <property type="evidence" value="ECO:0007669"/>
    <property type="project" value="UniProtKB-UniRule"/>
</dbReference>
<dbReference type="GO" id="GO:0004160">
    <property type="term" value="F:dihydroxy-acid dehydratase activity"/>
    <property type="evidence" value="ECO:0007669"/>
    <property type="project" value="UniProtKB-UniRule"/>
</dbReference>
<dbReference type="GO" id="GO:0000287">
    <property type="term" value="F:magnesium ion binding"/>
    <property type="evidence" value="ECO:0007669"/>
    <property type="project" value="UniProtKB-UniRule"/>
</dbReference>
<dbReference type="GO" id="GO:0009097">
    <property type="term" value="P:isoleucine biosynthetic process"/>
    <property type="evidence" value="ECO:0007669"/>
    <property type="project" value="UniProtKB-UniRule"/>
</dbReference>
<dbReference type="GO" id="GO:0009099">
    <property type="term" value="P:L-valine biosynthetic process"/>
    <property type="evidence" value="ECO:0007669"/>
    <property type="project" value="UniProtKB-UniRule"/>
</dbReference>
<dbReference type="FunFam" id="3.50.30.80:FF:000001">
    <property type="entry name" value="Dihydroxy-acid dehydratase"/>
    <property type="match status" value="1"/>
</dbReference>
<dbReference type="Gene3D" id="3.50.30.80">
    <property type="entry name" value="IlvD/EDD C-terminal domain-like"/>
    <property type="match status" value="1"/>
</dbReference>
<dbReference type="HAMAP" id="MF_00012">
    <property type="entry name" value="IlvD"/>
    <property type="match status" value="1"/>
</dbReference>
<dbReference type="InterPro" id="IPR050165">
    <property type="entry name" value="DHAD_IlvD/Edd"/>
</dbReference>
<dbReference type="InterPro" id="IPR042096">
    <property type="entry name" value="Dihydro-acid_dehy_C"/>
</dbReference>
<dbReference type="InterPro" id="IPR004404">
    <property type="entry name" value="DihydroxyA_deHydtase"/>
</dbReference>
<dbReference type="InterPro" id="IPR020558">
    <property type="entry name" value="DiOHA_6PGluconate_deHydtase_CS"/>
</dbReference>
<dbReference type="InterPro" id="IPR056740">
    <property type="entry name" value="ILV_EDD_C"/>
</dbReference>
<dbReference type="InterPro" id="IPR000581">
    <property type="entry name" value="ILV_EDD_N"/>
</dbReference>
<dbReference type="InterPro" id="IPR037237">
    <property type="entry name" value="IlvD/EDD_N"/>
</dbReference>
<dbReference type="NCBIfam" id="TIGR00110">
    <property type="entry name" value="ilvD"/>
    <property type="match status" value="1"/>
</dbReference>
<dbReference type="NCBIfam" id="NF002068">
    <property type="entry name" value="PRK00911.1"/>
    <property type="match status" value="1"/>
</dbReference>
<dbReference type="PANTHER" id="PTHR21000">
    <property type="entry name" value="DIHYDROXY-ACID DEHYDRATASE DAD"/>
    <property type="match status" value="1"/>
</dbReference>
<dbReference type="PANTHER" id="PTHR21000:SF5">
    <property type="entry name" value="DIHYDROXY-ACID DEHYDRATASE, MITOCHONDRIAL"/>
    <property type="match status" value="1"/>
</dbReference>
<dbReference type="Pfam" id="PF24877">
    <property type="entry name" value="ILV_EDD_C"/>
    <property type="match status" value="1"/>
</dbReference>
<dbReference type="Pfam" id="PF00920">
    <property type="entry name" value="ILVD_EDD_N"/>
    <property type="match status" value="1"/>
</dbReference>
<dbReference type="SUPFAM" id="SSF143975">
    <property type="entry name" value="IlvD/EDD N-terminal domain-like"/>
    <property type="match status" value="1"/>
</dbReference>
<dbReference type="SUPFAM" id="SSF52016">
    <property type="entry name" value="LeuD/IlvD-like"/>
    <property type="match status" value="1"/>
</dbReference>
<dbReference type="PROSITE" id="PS00886">
    <property type="entry name" value="ILVD_EDD_1"/>
    <property type="match status" value="1"/>
</dbReference>
<dbReference type="PROSITE" id="PS00887">
    <property type="entry name" value="ILVD_EDD_2"/>
    <property type="match status" value="1"/>
</dbReference>
<evidence type="ECO:0000255" key="1">
    <source>
        <dbReference type="HAMAP-Rule" id="MF_00012"/>
    </source>
</evidence>
<reference key="1">
    <citation type="journal article" date="2004" name="Nat. Biotechnol.">
        <title>The genome sequence of the extreme thermophile Thermus thermophilus.</title>
        <authorList>
            <person name="Henne A."/>
            <person name="Brueggemann H."/>
            <person name="Raasch C."/>
            <person name="Wiezer A."/>
            <person name="Hartsch T."/>
            <person name="Liesegang H."/>
            <person name="Johann A."/>
            <person name="Lienard T."/>
            <person name="Gohl O."/>
            <person name="Martinez-Arias R."/>
            <person name="Jacobi C."/>
            <person name="Starkuviene V."/>
            <person name="Schlenczeck S."/>
            <person name="Dencker S."/>
            <person name="Huber R."/>
            <person name="Klenk H.-P."/>
            <person name="Kramer W."/>
            <person name="Merkl R."/>
            <person name="Gottschalk G."/>
            <person name="Fritz H.-J."/>
        </authorList>
    </citation>
    <scope>NUCLEOTIDE SEQUENCE [LARGE SCALE GENOMIC DNA]</scope>
    <source>
        <strain>ATCC BAA-163 / DSM 7039 / HB27</strain>
    </source>
</reference>
<comment type="function">
    <text evidence="1">Functions in the biosynthesis of branched-chain amino acids. Catalyzes the dehydration of (2R,3R)-2,3-dihydroxy-3-methylpentanoate (2,3-dihydroxy-3-methylvalerate) into 2-oxo-3-methylpentanoate (2-oxo-3-methylvalerate) and of (2R)-2,3-dihydroxy-3-methylbutanoate (2,3-dihydroxyisovalerate) into 2-oxo-3-methylbutanoate (2-oxoisovalerate), the penultimate precursor to L-isoleucine and L-valine, respectively.</text>
</comment>
<comment type="catalytic activity">
    <reaction evidence="1">
        <text>(2R)-2,3-dihydroxy-3-methylbutanoate = 3-methyl-2-oxobutanoate + H2O</text>
        <dbReference type="Rhea" id="RHEA:24809"/>
        <dbReference type="ChEBI" id="CHEBI:11851"/>
        <dbReference type="ChEBI" id="CHEBI:15377"/>
        <dbReference type="ChEBI" id="CHEBI:49072"/>
        <dbReference type="EC" id="4.2.1.9"/>
    </reaction>
    <physiologicalReaction direction="left-to-right" evidence="1">
        <dbReference type="Rhea" id="RHEA:24810"/>
    </physiologicalReaction>
</comment>
<comment type="catalytic activity">
    <reaction evidence="1">
        <text>(2R,3R)-2,3-dihydroxy-3-methylpentanoate = (S)-3-methyl-2-oxopentanoate + H2O</text>
        <dbReference type="Rhea" id="RHEA:27694"/>
        <dbReference type="ChEBI" id="CHEBI:15377"/>
        <dbReference type="ChEBI" id="CHEBI:35146"/>
        <dbReference type="ChEBI" id="CHEBI:49258"/>
        <dbReference type="EC" id="4.2.1.9"/>
    </reaction>
    <physiologicalReaction direction="left-to-right" evidence="1">
        <dbReference type="Rhea" id="RHEA:27695"/>
    </physiologicalReaction>
</comment>
<comment type="cofactor">
    <cofactor evidence="1">
        <name>[2Fe-2S] cluster</name>
        <dbReference type="ChEBI" id="CHEBI:190135"/>
    </cofactor>
    <text evidence="1">Binds 1 [2Fe-2S] cluster per subunit. This cluster acts as a Lewis acid cofactor.</text>
</comment>
<comment type="cofactor">
    <cofactor evidence="1">
        <name>Mg(2+)</name>
        <dbReference type="ChEBI" id="CHEBI:18420"/>
    </cofactor>
</comment>
<comment type="pathway">
    <text evidence="1">Amino-acid biosynthesis; L-isoleucine biosynthesis; L-isoleucine from 2-oxobutanoate: step 3/4.</text>
</comment>
<comment type="pathway">
    <text evidence="1">Amino-acid biosynthesis; L-valine biosynthesis; L-valine from pyruvate: step 3/4.</text>
</comment>
<comment type="subunit">
    <text evidence="1">Homodimer.</text>
</comment>
<comment type="similarity">
    <text evidence="1">Belongs to the IlvD/Edd family.</text>
</comment>
<accession>Q72JA8</accession>
<protein>
    <recommendedName>
        <fullName evidence="1">Dihydroxy-acid dehydratase</fullName>
        <shortName evidence="1">DAD</shortName>
        <ecNumber evidence="1">4.2.1.9</ecNumber>
    </recommendedName>
</protein>
<organism>
    <name type="scientific">Thermus thermophilus (strain ATCC BAA-163 / DSM 7039 / HB27)</name>
    <dbReference type="NCBI Taxonomy" id="262724"/>
    <lineage>
        <taxon>Bacteria</taxon>
        <taxon>Thermotogati</taxon>
        <taxon>Deinococcota</taxon>
        <taxon>Deinococci</taxon>
        <taxon>Thermales</taxon>
        <taxon>Thermaceae</taxon>
        <taxon>Thermus</taxon>
    </lineage>
</organism>
<sequence length="555" mass="59414">MRSDQIKKGLKQAPARAMLRAVGVGDEDFGRPFVGVVNTFTDGMPCNFHLRELAQHLKAGLREAGLFPFEFGAPAISDGISMGTPGMRASLVSREVIADSVELIAQGYLYDGMVGLSACDKTIPGTAMGVIRSGVPGMVLYGGTIAPGEWQGRKLTIVEVFEAVGQRAAGKISEEELLEIERRAIPGPGACGGQYTANTMAMALEALGLSPVGYNAIPAVHPEKERATKEAGKILAWAIAHDWKPKDFLTRKSFLNAVAAVAATGGSTNAVLHLLALAKEAGVELSLDDFDQISRKTPVIADLRPWGTYTAWELYEAGGTALVFKRLLEAGLLFGEEKTLTGRTLAEEVERAYREQEGQKVVFPVEKALKPHGGLVVLKGNLAPQGAVLKLAGTERTSFEGPARVFDSEEAAMEKVLKGEIRPGDVVVIRYVGPKGAPGMPEMLSVTSAIVGEGLGPEVALLTDGRFSGGTRGLMIGHIAPEAFVGGPIALLEEGDRIRIDVEGRRLEVLLPEEELERRRARWRPRPPAFTHGLFARYAALVRQADEGAVLEDPL</sequence>